<accession>C1L0D6</accession>
<comment type="function">
    <text evidence="1">Specifically methylates the N7 position of guanine in position 535 of 16S rRNA.</text>
</comment>
<comment type="subcellular location">
    <subcellularLocation>
        <location evidence="1">Cytoplasm</location>
    </subcellularLocation>
</comment>
<comment type="similarity">
    <text evidence="1">Belongs to the methyltransferase superfamily. RNA methyltransferase RsmG family.</text>
</comment>
<dbReference type="EC" id="2.1.1.-" evidence="1"/>
<dbReference type="EMBL" id="FM242711">
    <property type="protein sequence ID" value="CAS06529.1"/>
    <property type="molecule type" value="Genomic_DNA"/>
</dbReference>
<dbReference type="RefSeq" id="WP_012681483.1">
    <property type="nucleotide sequence ID" value="NC_012488.1"/>
</dbReference>
<dbReference type="SMR" id="C1L0D6"/>
<dbReference type="KEGG" id="lmc:Lm4b_02775"/>
<dbReference type="HOGENOM" id="CLU_065341_0_2_9"/>
<dbReference type="GO" id="GO:0005829">
    <property type="term" value="C:cytosol"/>
    <property type="evidence" value="ECO:0007669"/>
    <property type="project" value="TreeGrafter"/>
</dbReference>
<dbReference type="GO" id="GO:0070043">
    <property type="term" value="F:rRNA (guanine-N7-)-methyltransferase activity"/>
    <property type="evidence" value="ECO:0007669"/>
    <property type="project" value="UniProtKB-UniRule"/>
</dbReference>
<dbReference type="CDD" id="cd02440">
    <property type="entry name" value="AdoMet_MTases"/>
    <property type="match status" value="1"/>
</dbReference>
<dbReference type="FunFam" id="3.40.50.150:FF:000041">
    <property type="entry name" value="Ribosomal RNA small subunit methyltransferase G"/>
    <property type="match status" value="1"/>
</dbReference>
<dbReference type="Gene3D" id="3.40.50.150">
    <property type="entry name" value="Vaccinia Virus protein VP39"/>
    <property type="match status" value="1"/>
</dbReference>
<dbReference type="HAMAP" id="MF_00074">
    <property type="entry name" value="16SrRNA_methyltr_G"/>
    <property type="match status" value="1"/>
</dbReference>
<dbReference type="InterPro" id="IPR003682">
    <property type="entry name" value="rRNA_ssu_MeTfrase_G"/>
</dbReference>
<dbReference type="InterPro" id="IPR029063">
    <property type="entry name" value="SAM-dependent_MTases_sf"/>
</dbReference>
<dbReference type="NCBIfam" id="TIGR00138">
    <property type="entry name" value="rsmG_gidB"/>
    <property type="match status" value="1"/>
</dbReference>
<dbReference type="PANTHER" id="PTHR31760">
    <property type="entry name" value="S-ADENOSYL-L-METHIONINE-DEPENDENT METHYLTRANSFERASES SUPERFAMILY PROTEIN"/>
    <property type="match status" value="1"/>
</dbReference>
<dbReference type="PANTHER" id="PTHR31760:SF0">
    <property type="entry name" value="S-ADENOSYL-L-METHIONINE-DEPENDENT METHYLTRANSFERASES SUPERFAMILY PROTEIN"/>
    <property type="match status" value="1"/>
</dbReference>
<dbReference type="Pfam" id="PF02527">
    <property type="entry name" value="GidB"/>
    <property type="match status" value="1"/>
</dbReference>
<dbReference type="PIRSF" id="PIRSF003078">
    <property type="entry name" value="GidB"/>
    <property type="match status" value="1"/>
</dbReference>
<dbReference type="SUPFAM" id="SSF53335">
    <property type="entry name" value="S-adenosyl-L-methionine-dependent methyltransferases"/>
    <property type="match status" value="1"/>
</dbReference>
<protein>
    <recommendedName>
        <fullName evidence="1">Ribosomal RNA small subunit methyltransferase G</fullName>
        <ecNumber evidence="1">2.1.1.-</ecNumber>
    </recommendedName>
    <alternativeName>
        <fullName evidence="1">16S rRNA 7-methylguanosine methyltransferase</fullName>
        <shortName evidence="1">16S rRNA m7G methyltransferase</shortName>
    </alternativeName>
</protein>
<name>RSMG_LISMC</name>
<reference key="1">
    <citation type="journal article" date="2012" name="BMC Genomics">
        <title>Comparative genomics and transcriptomics of lineages I, II, and III strains of Listeria monocytogenes.</title>
        <authorList>
            <person name="Hain T."/>
            <person name="Ghai R."/>
            <person name="Billion A."/>
            <person name="Kuenne C.T."/>
            <person name="Steinweg C."/>
            <person name="Izar B."/>
            <person name="Mohamed W."/>
            <person name="Mraheil M."/>
            <person name="Domann E."/>
            <person name="Schaffrath S."/>
            <person name="Karst U."/>
            <person name="Goesmann A."/>
            <person name="Oehm S."/>
            <person name="Puhler A."/>
            <person name="Merkl R."/>
            <person name="Vorwerk S."/>
            <person name="Glaser P."/>
            <person name="Garrido P."/>
            <person name="Rusniok C."/>
            <person name="Buchrieser C."/>
            <person name="Goebel W."/>
            <person name="Chakraborty T."/>
        </authorList>
    </citation>
    <scope>NUCLEOTIDE SEQUENCE [LARGE SCALE GENOMIC DNA]</scope>
    <source>
        <strain>CLIP80459</strain>
    </source>
</reference>
<gene>
    <name evidence="1" type="primary">rsmG</name>
    <name type="ordered locus">Lm4b_02775</name>
</gene>
<keyword id="KW-0963">Cytoplasm</keyword>
<keyword id="KW-0489">Methyltransferase</keyword>
<keyword id="KW-0698">rRNA processing</keyword>
<keyword id="KW-0949">S-adenosyl-L-methionine</keyword>
<keyword id="KW-0808">Transferase</keyword>
<proteinExistence type="inferred from homology"/>
<organism>
    <name type="scientific">Listeria monocytogenes serotype 4b (strain CLIP80459)</name>
    <dbReference type="NCBI Taxonomy" id="568819"/>
    <lineage>
        <taxon>Bacteria</taxon>
        <taxon>Bacillati</taxon>
        <taxon>Bacillota</taxon>
        <taxon>Bacilli</taxon>
        <taxon>Bacillales</taxon>
        <taxon>Listeriaceae</taxon>
        <taxon>Listeria</taxon>
    </lineage>
</organism>
<evidence type="ECO:0000255" key="1">
    <source>
        <dbReference type="HAMAP-Rule" id="MF_00074"/>
    </source>
</evidence>
<sequence>MNPEQFQTALAEKGIELSDTQLKQFHDYFEMLVEWNEKMNLTAITDEKEVYLKHFYDSISAAFYVDFTKFDTICDVGAGAGFPSLPIKICFPHLKVSIVDSLKKRMTFLDALAEKLGLTDVHFYHDRAETFGQNKAHREKYDLVTARAVARMSVLSELCMPLVKKGGSFLVMKAAQAEQELQTAEKAIKLFGGKVEEHFAFSLPVEESERNIYVITKTKETPNKYPRKPGTPNKLPIE</sequence>
<feature type="chain" id="PRO_1000202503" description="Ribosomal RNA small subunit methyltransferase G">
    <location>
        <begin position="1"/>
        <end position="238"/>
    </location>
</feature>
<feature type="binding site" evidence="1">
    <location>
        <position position="77"/>
    </location>
    <ligand>
        <name>S-adenosyl-L-methionine</name>
        <dbReference type="ChEBI" id="CHEBI:59789"/>
    </ligand>
</feature>
<feature type="binding site" evidence="1">
    <location>
        <position position="82"/>
    </location>
    <ligand>
        <name>S-adenosyl-L-methionine</name>
        <dbReference type="ChEBI" id="CHEBI:59789"/>
    </ligand>
</feature>
<feature type="binding site" evidence="1">
    <location>
        <begin position="128"/>
        <end position="129"/>
    </location>
    <ligand>
        <name>S-adenosyl-L-methionine</name>
        <dbReference type="ChEBI" id="CHEBI:59789"/>
    </ligand>
</feature>
<feature type="binding site" evidence="1">
    <location>
        <position position="147"/>
    </location>
    <ligand>
        <name>S-adenosyl-L-methionine</name>
        <dbReference type="ChEBI" id="CHEBI:59789"/>
    </ligand>
</feature>